<feature type="chain" id="PRO_1000194217" description="Small ribosomal subunit protein uS12">
    <location>
        <begin position="1"/>
        <end position="137"/>
    </location>
</feature>
<feature type="region of interest" description="Disordered" evidence="3">
    <location>
        <begin position="1"/>
        <end position="57"/>
    </location>
</feature>
<feature type="modified residue" description="3-methylthioaspartic acid" evidence="1">
    <location>
        <position position="102"/>
    </location>
</feature>
<sequence length="137" mass="15144">MPTINQLVRKPRKSKVEKSKSPALNVGYNSHKKVQTNVSSPQKRGVATRVGTMTPKKPNSALRKFARVRLSNLIEVTAYIPGIGHNLQEHSVVLLRGGRVKDLPGVRYHIVRGALDTAGVNDRKQGRSKYGTKRPKA</sequence>
<gene>
    <name evidence="2" type="primary">rpsL</name>
    <name type="ordered locus">SPP_0320</name>
</gene>
<organism>
    <name type="scientific">Streptococcus pneumoniae (strain P1031)</name>
    <dbReference type="NCBI Taxonomy" id="488223"/>
    <lineage>
        <taxon>Bacteria</taxon>
        <taxon>Bacillati</taxon>
        <taxon>Bacillota</taxon>
        <taxon>Bacilli</taxon>
        <taxon>Lactobacillales</taxon>
        <taxon>Streptococcaceae</taxon>
        <taxon>Streptococcus</taxon>
    </lineage>
</organism>
<comment type="function">
    <text evidence="2">With S4 and S5 plays an important role in translational accuracy.</text>
</comment>
<comment type="function">
    <text evidence="2">Interacts with and stabilizes bases of the 16S rRNA that are involved in tRNA selection in the A site and with the mRNA backbone. Located at the interface of the 30S and 50S subunits, it traverses the body of the 30S subunit contacting proteins on the other side and probably holding the rRNA structure together. The combined cluster of proteins S8, S12 and S17 appears to hold together the shoulder and platform of the 30S subunit.</text>
</comment>
<comment type="subunit">
    <text evidence="2">Part of the 30S ribosomal subunit. Contacts proteins S8 and S17. May interact with IF1 in the 30S initiation complex.</text>
</comment>
<comment type="similarity">
    <text evidence="2">Belongs to the universal ribosomal protein uS12 family.</text>
</comment>
<proteinExistence type="inferred from homology"/>
<protein>
    <recommendedName>
        <fullName evidence="2">Small ribosomal subunit protein uS12</fullName>
    </recommendedName>
    <alternativeName>
        <fullName evidence="4">30S ribosomal protein S12</fullName>
    </alternativeName>
</protein>
<reference key="1">
    <citation type="journal article" date="2010" name="Genome Biol.">
        <title>Structure and dynamics of the pan-genome of Streptococcus pneumoniae and closely related species.</title>
        <authorList>
            <person name="Donati C."/>
            <person name="Hiller N.L."/>
            <person name="Tettelin H."/>
            <person name="Muzzi A."/>
            <person name="Croucher N.J."/>
            <person name="Angiuoli S.V."/>
            <person name="Oggioni M."/>
            <person name="Dunning Hotopp J.C."/>
            <person name="Hu F.Z."/>
            <person name="Riley D.R."/>
            <person name="Covacci A."/>
            <person name="Mitchell T.J."/>
            <person name="Bentley S.D."/>
            <person name="Kilian M."/>
            <person name="Ehrlich G.D."/>
            <person name="Rappuoli R."/>
            <person name="Moxon E.R."/>
            <person name="Masignani V."/>
        </authorList>
    </citation>
    <scope>NUCLEOTIDE SEQUENCE [LARGE SCALE GENOMIC DNA]</scope>
    <source>
        <strain>P1031</strain>
    </source>
</reference>
<dbReference type="EMBL" id="CP000920">
    <property type="protein sequence ID" value="ACO20924.1"/>
    <property type="molecule type" value="Genomic_DNA"/>
</dbReference>
<dbReference type="RefSeq" id="WP_001142332.1">
    <property type="nucleotide sequence ID" value="NC_012467.1"/>
</dbReference>
<dbReference type="SMR" id="C1CIF1"/>
<dbReference type="GeneID" id="93922571"/>
<dbReference type="KEGG" id="spp:SPP_0320"/>
<dbReference type="HOGENOM" id="CLU_104295_1_2_9"/>
<dbReference type="GO" id="GO:0015935">
    <property type="term" value="C:small ribosomal subunit"/>
    <property type="evidence" value="ECO:0007669"/>
    <property type="project" value="InterPro"/>
</dbReference>
<dbReference type="GO" id="GO:0019843">
    <property type="term" value="F:rRNA binding"/>
    <property type="evidence" value="ECO:0007669"/>
    <property type="project" value="UniProtKB-UniRule"/>
</dbReference>
<dbReference type="GO" id="GO:0003735">
    <property type="term" value="F:structural constituent of ribosome"/>
    <property type="evidence" value="ECO:0007669"/>
    <property type="project" value="InterPro"/>
</dbReference>
<dbReference type="GO" id="GO:0000049">
    <property type="term" value="F:tRNA binding"/>
    <property type="evidence" value="ECO:0007669"/>
    <property type="project" value="UniProtKB-UniRule"/>
</dbReference>
<dbReference type="GO" id="GO:0006412">
    <property type="term" value="P:translation"/>
    <property type="evidence" value="ECO:0007669"/>
    <property type="project" value="UniProtKB-UniRule"/>
</dbReference>
<dbReference type="CDD" id="cd03368">
    <property type="entry name" value="Ribosomal_S12"/>
    <property type="match status" value="1"/>
</dbReference>
<dbReference type="FunFam" id="2.40.50.140:FF:000001">
    <property type="entry name" value="30S ribosomal protein S12"/>
    <property type="match status" value="1"/>
</dbReference>
<dbReference type="Gene3D" id="2.40.50.140">
    <property type="entry name" value="Nucleic acid-binding proteins"/>
    <property type="match status" value="1"/>
</dbReference>
<dbReference type="HAMAP" id="MF_00403_B">
    <property type="entry name" value="Ribosomal_uS12_B"/>
    <property type="match status" value="1"/>
</dbReference>
<dbReference type="InterPro" id="IPR012340">
    <property type="entry name" value="NA-bd_OB-fold"/>
</dbReference>
<dbReference type="InterPro" id="IPR006032">
    <property type="entry name" value="Ribosomal_uS12"/>
</dbReference>
<dbReference type="InterPro" id="IPR005679">
    <property type="entry name" value="Ribosomal_uS12_bac"/>
</dbReference>
<dbReference type="NCBIfam" id="TIGR00981">
    <property type="entry name" value="rpsL_bact"/>
    <property type="match status" value="1"/>
</dbReference>
<dbReference type="PANTHER" id="PTHR11652">
    <property type="entry name" value="30S RIBOSOMAL PROTEIN S12 FAMILY MEMBER"/>
    <property type="match status" value="1"/>
</dbReference>
<dbReference type="Pfam" id="PF00164">
    <property type="entry name" value="Ribosom_S12_S23"/>
    <property type="match status" value="1"/>
</dbReference>
<dbReference type="PIRSF" id="PIRSF002133">
    <property type="entry name" value="Ribosomal_S12/S23"/>
    <property type="match status" value="1"/>
</dbReference>
<dbReference type="PRINTS" id="PR01034">
    <property type="entry name" value="RIBOSOMALS12"/>
</dbReference>
<dbReference type="SUPFAM" id="SSF50249">
    <property type="entry name" value="Nucleic acid-binding proteins"/>
    <property type="match status" value="1"/>
</dbReference>
<dbReference type="PROSITE" id="PS00055">
    <property type="entry name" value="RIBOSOMAL_S12"/>
    <property type="match status" value="1"/>
</dbReference>
<name>RS12_STRZP</name>
<evidence type="ECO:0000250" key="1"/>
<evidence type="ECO:0000255" key="2">
    <source>
        <dbReference type="HAMAP-Rule" id="MF_00403"/>
    </source>
</evidence>
<evidence type="ECO:0000256" key="3">
    <source>
        <dbReference type="SAM" id="MobiDB-lite"/>
    </source>
</evidence>
<evidence type="ECO:0000305" key="4"/>
<accession>C1CIF1</accession>
<keyword id="KW-0488">Methylation</keyword>
<keyword id="KW-0687">Ribonucleoprotein</keyword>
<keyword id="KW-0689">Ribosomal protein</keyword>
<keyword id="KW-0694">RNA-binding</keyword>
<keyword id="KW-0699">rRNA-binding</keyword>
<keyword id="KW-0820">tRNA-binding</keyword>